<protein>
    <recommendedName>
        <fullName>MADS-box transcription factor 26</fullName>
    </recommendedName>
    <alternativeName>
        <fullName>FDRMADS3</fullName>
    </alternativeName>
    <alternativeName>
        <fullName>OsMADS26</fullName>
    </alternativeName>
    <alternativeName>
        <fullName>RMADS220</fullName>
    </alternativeName>
</protein>
<accession>A2YQK9</accession>
<accession>Q8L887</accession>
<accession>Q9XH60</accession>
<accession>Q9XJ62</accession>
<feature type="chain" id="PRO_0000296351" description="MADS-box transcription factor 26">
    <location>
        <begin position="1"/>
        <end position="222"/>
    </location>
</feature>
<feature type="domain" description="MADS-box" evidence="1">
    <location>
        <begin position="1"/>
        <end position="61"/>
    </location>
</feature>
<feature type="domain" description="K-box" evidence="2">
    <location>
        <begin position="85"/>
        <end position="176"/>
    </location>
</feature>
<feature type="sequence conflict" description="In Ref. 1; AAD40952." evidence="3" ref="1">
    <original>PVH</original>
    <variation>STN</variation>
    <location>
        <begin position="14"/>
        <end position="16"/>
    </location>
</feature>
<evidence type="ECO:0000255" key="1">
    <source>
        <dbReference type="PROSITE-ProRule" id="PRU00251"/>
    </source>
</evidence>
<evidence type="ECO:0000255" key="2">
    <source>
        <dbReference type="PROSITE-ProRule" id="PRU00629"/>
    </source>
</evidence>
<evidence type="ECO:0000305" key="3"/>
<proteinExistence type="evidence at transcript level"/>
<keyword id="KW-0238">DNA-binding</keyword>
<keyword id="KW-0539">Nucleus</keyword>
<keyword id="KW-1185">Reference proteome</keyword>
<keyword id="KW-0804">Transcription</keyword>
<keyword id="KW-0805">Transcription regulation</keyword>
<organism>
    <name type="scientific">Oryza sativa subsp. indica</name>
    <name type="common">Rice</name>
    <dbReference type="NCBI Taxonomy" id="39946"/>
    <lineage>
        <taxon>Eukaryota</taxon>
        <taxon>Viridiplantae</taxon>
        <taxon>Streptophyta</taxon>
        <taxon>Embryophyta</taxon>
        <taxon>Tracheophyta</taxon>
        <taxon>Spermatophyta</taxon>
        <taxon>Magnoliopsida</taxon>
        <taxon>Liliopsida</taxon>
        <taxon>Poales</taxon>
        <taxon>Poaceae</taxon>
        <taxon>BOP clade</taxon>
        <taxon>Oryzoideae</taxon>
        <taxon>Oryzeae</taxon>
        <taxon>Oryzinae</taxon>
        <taxon>Oryza</taxon>
        <taxon>Oryza sativa</taxon>
    </lineage>
</organism>
<gene>
    <name type="primary">MADS26</name>
    <name type="ORF">OsI_026602</name>
</gene>
<name>MAD26_ORYSI</name>
<comment type="function">
    <text>Probable transcription factor.</text>
</comment>
<comment type="subcellular location">
    <subcellularLocation>
        <location evidence="3">Nucleus</location>
    </subcellularLocation>
</comment>
<comment type="sequence caution" evidence="3">
    <conflict type="frameshift">
        <sequence resource="EMBL-CDS" id="AAD40952"/>
    </conflict>
</comment>
<comment type="sequence caution" evidence="3">
    <conflict type="frameshift">
        <sequence resource="EMBL-CDS" id="AAM55472"/>
    </conflict>
</comment>
<comment type="sequence caution" evidence="3">
    <conflict type="erroneous gene model prediction">
        <sequence resource="EMBL-CDS" id="EAZ05370"/>
    </conflict>
</comment>
<reference key="1">
    <citation type="submission" date="2002-05" db="EMBL/GenBank/DDBJ databases">
        <title>Oryza sativa (indica cultivar-group) MADS-box protein FDRMADS3.</title>
        <authorList>
            <person name="Chen R."/>
            <person name="Gao Z."/>
            <person name="Jia H.-W."/>
            <person name="Sun C.-R."/>
        </authorList>
    </citation>
    <scope>NUCLEOTIDE SEQUENCE [MRNA]</scope>
</reference>
<reference key="2">
    <citation type="journal article" date="2005" name="PLoS Biol.">
        <title>The genomes of Oryza sativa: a history of duplications.</title>
        <authorList>
            <person name="Yu J."/>
            <person name="Wang J."/>
            <person name="Lin W."/>
            <person name="Li S."/>
            <person name="Li H."/>
            <person name="Zhou J."/>
            <person name="Ni P."/>
            <person name="Dong W."/>
            <person name="Hu S."/>
            <person name="Zeng C."/>
            <person name="Zhang J."/>
            <person name="Zhang Y."/>
            <person name="Li R."/>
            <person name="Xu Z."/>
            <person name="Li S."/>
            <person name="Li X."/>
            <person name="Zheng H."/>
            <person name="Cong L."/>
            <person name="Lin L."/>
            <person name="Yin J."/>
            <person name="Geng J."/>
            <person name="Li G."/>
            <person name="Shi J."/>
            <person name="Liu J."/>
            <person name="Lv H."/>
            <person name="Li J."/>
            <person name="Wang J."/>
            <person name="Deng Y."/>
            <person name="Ran L."/>
            <person name="Shi X."/>
            <person name="Wang X."/>
            <person name="Wu Q."/>
            <person name="Li C."/>
            <person name="Ren X."/>
            <person name="Wang J."/>
            <person name="Wang X."/>
            <person name="Li D."/>
            <person name="Liu D."/>
            <person name="Zhang X."/>
            <person name="Ji Z."/>
            <person name="Zhao W."/>
            <person name="Sun Y."/>
            <person name="Zhang Z."/>
            <person name="Bao J."/>
            <person name="Han Y."/>
            <person name="Dong L."/>
            <person name="Ji J."/>
            <person name="Chen P."/>
            <person name="Wu S."/>
            <person name="Liu J."/>
            <person name="Xiao Y."/>
            <person name="Bu D."/>
            <person name="Tan J."/>
            <person name="Yang L."/>
            <person name="Ye C."/>
            <person name="Zhang J."/>
            <person name="Xu J."/>
            <person name="Zhou Y."/>
            <person name="Yu Y."/>
            <person name="Zhang B."/>
            <person name="Zhuang S."/>
            <person name="Wei H."/>
            <person name="Liu B."/>
            <person name="Lei M."/>
            <person name="Yu H."/>
            <person name="Li Y."/>
            <person name="Xu H."/>
            <person name="Wei S."/>
            <person name="He X."/>
            <person name="Fang L."/>
            <person name="Zhang Z."/>
            <person name="Zhang Y."/>
            <person name="Huang X."/>
            <person name="Su Z."/>
            <person name="Tong W."/>
            <person name="Li J."/>
            <person name="Tong Z."/>
            <person name="Li S."/>
            <person name="Ye J."/>
            <person name="Wang L."/>
            <person name="Fang L."/>
            <person name="Lei T."/>
            <person name="Chen C.-S."/>
            <person name="Chen H.-C."/>
            <person name="Xu Z."/>
            <person name="Li H."/>
            <person name="Huang H."/>
            <person name="Zhang F."/>
            <person name="Xu H."/>
            <person name="Li N."/>
            <person name="Zhao C."/>
            <person name="Li S."/>
            <person name="Dong L."/>
            <person name="Huang Y."/>
            <person name="Li L."/>
            <person name="Xi Y."/>
            <person name="Qi Q."/>
            <person name="Li W."/>
            <person name="Zhang B."/>
            <person name="Hu W."/>
            <person name="Zhang Y."/>
            <person name="Tian X."/>
            <person name="Jiao Y."/>
            <person name="Liang X."/>
            <person name="Jin J."/>
            <person name="Gao L."/>
            <person name="Zheng W."/>
            <person name="Hao B."/>
            <person name="Liu S.-M."/>
            <person name="Wang W."/>
            <person name="Yuan L."/>
            <person name="Cao M."/>
            <person name="McDermott J."/>
            <person name="Samudrala R."/>
            <person name="Wang J."/>
            <person name="Wong G.K.-S."/>
            <person name="Yang H."/>
        </authorList>
    </citation>
    <scope>NUCLEOTIDE SEQUENCE [LARGE SCALE GENOMIC DNA]</scope>
    <source>
        <strain>cv. 93-11</strain>
    </source>
</reference>
<sequence length="222" mass="25217">MARGKVQLRRIENPVHRQVTFCKRRAGLLKKARELSILCEADIGIIIFSAHGKLYDLATTGTMEELIERYKSASGEQANACGDQRMDPKQEAMVLKQEINLLQKGLRYIYGNRANEHMTVEELNALERYLEIWMYNIRSAKMQIMIQEIQALKSKEGMLKAANEILQEKIVEQNGLIDVGMMVADQQNGHFSTVPLLEEITNPLTILSGYSTCRGSEMGYSF</sequence>
<dbReference type="EMBL" id="AF141868">
    <property type="protein sequence ID" value="AAD40952.1"/>
    <property type="status" value="ALT_FRAME"/>
    <property type="molecule type" value="mRNA"/>
</dbReference>
<dbReference type="EMBL" id="AY115556">
    <property type="protein sequence ID" value="AAM55472.1"/>
    <property type="status" value="ALT_FRAME"/>
    <property type="molecule type" value="mRNA"/>
</dbReference>
<dbReference type="EMBL" id="CM000133">
    <property type="protein sequence ID" value="EAZ05370.1"/>
    <property type="status" value="ALT_SEQ"/>
    <property type="molecule type" value="Genomic_DNA"/>
</dbReference>
<dbReference type="SMR" id="A2YQK9"/>
<dbReference type="EnsemblPlants" id="OsGoSa_08g0000910.01">
    <property type="protein sequence ID" value="OsGoSa_08g0000910.01"/>
    <property type="gene ID" value="OsGoSa_08g0000910"/>
</dbReference>
<dbReference type="EnsemblPlants" id="OsKYG_08g0000870.01">
    <property type="protein sequence ID" value="OsKYG_08g0000870.01"/>
    <property type="gene ID" value="OsKYG_08g0000870"/>
</dbReference>
<dbReference type="EnsemblPlants" id="OsLaMu_08g0000910.01">
    <property type="protein sequence ID" value="OsLaMu_08g0000910.01"/>
    <property type="gene ID" value="OsLaMu_08g0000910"/>
</dbReference>
<dbReference type="EnsemblPlants" id="OsLiXu_08g0000890.01">
    <property type="protein sequence ID" value="OsLiXu_08g0000890.01"/>
    <property type="gene ID" value="OsLiXu_08g0000890"/>
</dbReference>
<dbReference type="EnsemblPlants" id="OsMH63_08G000950_02">
    <property type="protein sequence ID" value="OsMH63_08G000950_02"/>
    <property type="gene ID" value="OsMH63_08G000950"/>
</dbReference>
<dbReference type="EnsemblPlants" id="OsPr106_08g0000890.01">
    <property type="protein sequence ID" value="OsPr106_08g0000890.01"/>
    <property type="gene ID" value="OsPr106_08g0000890"/>
</dbReference>
<dbReference type="EnsemblPlants" id="OsZS97_08G000950_01">
    <property type="protein sequence ID" value="OsZS97_08G000950_01"/>
    <property type="gene ID" value="OsZS97_08G000950"/>
</dbReference>
<dbReference type="Gramene" id="OsGoSa_08g0000910.01">
    <property type="protein sequence ID" value="OsGoSa_08g0000910.01"/>
    <property type="gene ID" value="OsGoSa_08g0000910"/>
</dbReference>
<dbReference type="Gramene" id="OsKYG_08g0000870.01">
    <property type="protein sequence ID" value="OsKYG_08g0000870.01"/>
    <property type="gene ID" value="OsKYG_08g0000870"/>
</dbReference>
<dbReference type="Gramene" id="OsLaMu_08g0000910.01">
    <property type="protein sequence ID" value="OsLaMu_08g0000910.01"/>
    <property type="gene ID" value="OsLaMu_08g0000910"/>
</dbReference>
<dbReference type="Gramene" id="OsLiXu_08g0000890.01">
    <property type="protein sequence ID" value="OsLiXu_08g0000890.01"/>
    <property type="gene ID" value="OsLiXu_08g0000890"/>
</dbReference>
<dbReference type="Gramene" id="OsMH63_08G000950_02">
    <property type="protein sequence ID" value="OsMH63_08G000950_02"/>
    <property type="gene ID" value="OsMH63_08G000950"/>
</dbReference>
<dbReference type="Gramene" id="OsPr106_08g0000890.01">
    <property type="protein sequence ID" value="OsPr106_08g0000890.01"/>
    <property type="gene ID" value="OsPr106_08g0000890"/>
</dbReference>
<dbReference type="Gramene" id="OsZS97_08G000950_01">
    <property type="protein sequence ID" value="OsZS97_08G000950_01"/>
    <property type="gene ID" value="OsZS97_08G000950"/>
</dbReference>
<dbReference type="HOGENOM" id="CLU_053053_0_3_1"/>
<dbReference type="OrthoDB" id="1898716at2759"/>
<dbReference type="Proteomes" id="UP000007015">
    <property type="component" value="Chromosome 8"/>
</dbReference>
<dbReference type="GO" id="GO:0005634">
    <property type="term" value="C:nucleus"/>
    <property type="evidence" value="ECO:0007669"/>
    <property type="project" value="UniProtKB-SubCell"/>
</dbReference>
<dbReference type="GO" id="GO:0003700">
    <property type="term" value="F:DNA-binding transcription factor activity"/>
    <property type="evidence" value="ECO:0007669"/>
    <property type="project" value="InterPro"/>
</dbReference>
<dbReference type="GO" id="GO:0046983">
    <property type="term" value="F:protein dimerization activity"/>
    <property type="evidence" value="ECO:0007669"/>
    <property type="project" value="InterPro"/>
</dbReference>
<dbReference type="GO" id="GO:0000977">
    <property type="term" value="F:RNA polymerase II transcription regulatory region sequence-specific DNA binding"/>
    <property type="evidence" value="ECO:0007669"/>
    <property type="project" value="InterPro"/>
</dbReference>
<dbReference type="GO" id="GO:0045944">
    <property type="term" value="P:positive regulation of transcription by RNA polymerase II"/>
    <property type="evidence" value="ECO:0007669"/>
    <property type="project" value="InterPro"/>
</dbReference>
<dbReference type="CDD" id="cd00265">
    <property type="entry name" value="MADS_MEF2_like"/>
    <property type="match status" value="1"/>
</dbReference>
<dbReference type="Gene3D" id="3.40.1810.10">
    <property type="entry name" value="Transcription factor, MADS-box"/>
    <property type="match status" value="1"/>
</dbReference>
<dbReference type="InterPro" id="IPR050142">
    <property type="entry name" value="MADS-box/MEF2_TF"/>
</dbReference>
<dbReference type="InterPro" id="IPR033896">
    <property type="entry name" value="MEF2-like_N"/>
</dbReference>
<dbReference type="InterPro" id="IPR002487">
    <property type="entry name" value="TF_Kbox"/>
</dbReference>
<dbReference type="InterPro" id="IPR002100">
    <property type="entry name" value="TF_MADSbox"/>
</dbReference>
<dbReference type="InterPro" id="IPR036879">
    <property type="entry name" value="TF_MADSbox_sf"/>
</dbReference>
<dbReference type="PANTHER" id="PTHR48019">
    <property type="entry name" value="SERUM RESPONSE FACTOR HOMOLOG"/>
    <property type="match status" value="1"/>
</dbReference>
<dbReference type="Pfam" id="PF01486">
    <property type="entry name" value="K-box"/>
    <property type="match status" value="1"/>
</dbReference>
<dbReference type="Pfam" id="PF00319">
    <property type="entry name" value="SRF-TF"/>
    <property type="match status" value="1"/>
</dbReference>
<dbReference type="PRINTS" id="PR00404">
    <property type="entry name" value="MADSDOMAIN"/>
</dbReference>
<dbReference type="SMART" id="SM00432">
    <property type="entry name" value="MADS"/>
    <property type="match status" value="1"/>
</dbReference>
<dbReference type="SUPFAM" id="SSF55455">
    <property type="entry name" value="SRF-like"/>
    <property type="match status" value="1"/>
</dbReference>
<dbReference type="PROSITE" id="PS51297">
    <property type="entry name" value="K_BOX"/>
    <property type="match status" value="1"/>
</dbReference>
<dbReference type="PROSITE" id="PS00350">
    <property type="entry name" value="MADS_BOX_1"/>
    <property type="match status" value="1"/>
</dbReference>
<dbReference type="PROSITE" id="PS50066">
    <property type="entry name" value="MADS_BOX_2"/>
    <property type="match status" value="1"/>
</dbReference>